<reference key="1">
    <citation type="journal article" date="2003" name="J. Biol. Chem.">
        <title>Biochemical function of female-lethal (2)D/Wilms' tumor suppressor-1-associated proteins in alternative pre-mRNA splicing.</title>
        <authorList>
            <person name="Ortega A."/>
            <person name="Niksic M."/>
            <person name="Bachi A."/>
            <person name="Wilm M."/>
            <person name="Sanchez L."/>
            <person name="Hastie N."/>
            <person name="Valcarcel J."/>
        </authorList>
    </citation>
    <scope>NUCLEOTIDE SEQUENCE [MRNA] (ISOFORM 1)</scope>
    <scope>FUNCTION</scope>
</reference>
<reference key="2">
    <citation type="journal article" date="1995" name="DNA Res.">
        <title>Prediction of the coding sequences of unidentified human genes. III. The coding sequences of 40 new genes (KIAA0081-KIAA0120) deduced by analysis of cDNA clones from human cell line KG-1.</title>
        <authorList>
            <person name="Nagase T."/>
            <person name="Miyajima N."/>
            <person name="Tanaka A."/>
            <person name="Sazuka T."/>
            <person name="Seki N."/>
            <person name="Sato S."/>
            <person name="Tabata S."/>
            <person name="Ishikawa K."/>
            <person name="Kawarabayasi Y."/>
            <person name="Kotani H."/>
            <person name="Nomura N."/>
        </authorList>
    </citation>
    <scope>NUCLEOTIDE SEQUENCE [LARGE SCALE MRNA] (ISOFORM 2)</scope>
    <source>
        <tissue>Bone marrow</tissue>
    </source>
</reference>
<reference key="3">
    <citation type="journal article" date="2004" name="Nat. Genet.">
        <title>Complete sequencing and characterization of 21,243 full-length human cDNAs.</title>
        <authorList>
            <person name="Ota T."/>
            <person name="Suzuki Y."/>
            <person name="Nishikawa T."/>
            <person name="Otsuki T."/>
            <person name="Sugiyama T."/>
            <person name="Irie R."/>
            <person name="Wakamatsu A."/>
            <person name="Hayashi K."/>
            <person name="Sato H."/>
            <person name="Nagai K."/>
            <person name="Kimura K."/>
            <person name="Makita H."/>
            <person name="Sekine M."/>
            <person name="Obayashi M."/>
            <person name="Nishi T."/>
            <person name="Shibahara T."/>
            <person name="Tanaka T."/>
            <person name="Ishii S."/>
            <person name="Yamamoto J."/>
            <person name="Saito K."/>
            <person name="Kawai Y."/>
            <person name="Isono Y."/>
            <person name="Nakamura Y."/>
            <person name="Nagahari K."/>
            <person name="Murakami K."/>
            <person name="Yasuda T."/>
            <person name="Iwayanagi T."/>
            <person name="Wagatsuma M."/>
            <person name="Shiratori A."/>
            <person name="Sudo H."/>
            <person name="Hosoiri T."/>
            <person name="Kaku Y."/>
            <person name="Kodaira H."/>
            <person name="Kondo H."/>
            <person name="Sugawara M."/>
            <person name="Takahashi M."/>
            <person name="Kanda K."/>
            <person name="Yokoi T."/>
            <person name="Furuya T."/>
            <person name="Kikkawa E."/>
            <person name="Omura Y."/>
            <person name="Abe K."/>
            <person name="Kamihara K."/>
            <person name="Katsuta N."/>
            <person name="Sato K."/>
            <person name="Tanikawa M."/>
            <person name="Yamazaki M."/>
            <person name="Ninomiya K."/>
            <person name="Ishibashi T."/>
            <person name="Yamashita H."/>
            <person name="Murakawa K."/>
            <person name="Fujimori K."/>
            <person name="Tanai H."/>
            <person name="Kimata M."/>
            <person name="Watanabe M."/>
            <person name="Hiraoka S."/>
            <person name="Chiba Y."/>
            <person name="Ishida S."/>
            <person name="Ono Y."/>
            <person name="Takiguchi S."/>
            <person name="Watanabe S."/>
            <person name="Yosida M."/>
            <person name="Hotuta T."/>
            <person name="Kusano J."/>
            <person name="Kanehori K."/>
            <person name="Takahashi-Fujii A."/>
            <person name="Hara H."/>
            <person name="Tanase T.-O."/>
            <person name="Nomura Y."/>
            <person name="Togiya S."/>
            <person name="Komai F."/>
            <person name="Hara R."/>
            <person name="Takeuchi K."/>
            <person name="Arita M."/>
            <person name="Imose N."/>
            <person name="Musashino K."/>
            <person name="Yuuki H."/>
            <person name="Oshima A."/>
            <person name="Sasaki N."/>
            <person name="Aotsuka S."/>
            <person name="Yoshikawa Y."/>
            <person name="Matsunawa H."/>
            <person name="Ichihara T."/>
            <person name="Shiohata N."/>
            <person name="Sano S."/>
            <person name="Moriya S."/>
            <person name="Momiyama H."/>
            <person name="Satoh N."/>
            <person name="Takami S."/>
            <person name="Terashima Y."/>
            <person name="Suzuki O."/>
            <person name="Nakagawa S."/>
            <person name="Senoh A."/>
            <person name="Mizoguchi H."/>
            <person name="Goto Y."/>
            <person name="Shimizu F."/>
            <person name="Wakebe H."/>
            <person name="Hishigaki H."/>
            <person name="Watanabe T."/>
            <person name="Sugiyama A."/>
            <person name="Takemoto M."/>
            <person name="Kawakami B."/>
            <person name="Yamazaki M."/>
            <person name="Watanabe K."/>
            <person name="Kumagai A."/>
            <person name="Itakura S."/>
            <person name="Fukuzumi Y."/>
            <person name="Fujimori Y."/>
            <person name="Komiyama M."/>
            <person name="Tashiro H."/>
            <person name="Tanigami A."/>
            <person name="Fujiwara T."/>
            <person name="Ono T."/>
            <person name="Yamada K."/>
            <person name="Fujii Y."/>
            <person name="Ozaki K."/>
            <person name="Hirao M."/>
            <person name="Ohmori Y."/>
            <person name="Kawabata A."/>
            <person name="Hikiji T."/>
            <person name="Kobatake N."/>
            <person name="Inagaki H."/>
            <person name="Ikema Y."/>
            <person name="Okamoto S."/>
            <person name="Okitani R."/>
            <person name="Kawakami T."/>
            <person name="Noguchi S."/>
            <person name="Itoh T."/>
            <person name="Shigeta K."/>
            <person name="Senba T."/>
            <person name="Matsumura K."/>
            <person name="Nakajima Y."/>
            <person name="Mizuno T."/>
            <person name="Morinaga M."/>
            <person name="Sasaki M."/>
            <person name="Togashi T."/>
            <person name="Oyama M."/>
            <person name="Hata H."/>
            <person name="Watanabe M."/>
            <person name="Komatsu T."/>
            <person name="Mizushima-Sugano J."/>
            <person name="Satoh T."/>
            <person name="Shirai Y."/>
            <person name="Takahashi Y."/>
            <person name="Nakagawa K."/>
            <person name="Okumura K."/>
            <person name="Nagase T."/>
            <person name="Nomura N."/>
            <person name="Kikuchi H."/>
            <person name="Masuho Y."/>
            <person name="Yamashita R."/>
            <person name="Nakai K."/>
            <person name="Yada T."/>
            <person name="Nakamura Y."/>
            <person name="Ohara O."/>
            <person name="Isogai T."/>
            <person name="Sugano S."/>
        </authorList>
    </citation>
    <scope>NUCLEOTIDE SEQUENCE [LARGE SCALE MRNA] (ISOFORM 2)</scope>
    <source>
        <tissue>Placenta</tissue>
    </source>
</reference>
<reference key="4">
    <citation type="journal article" date="2003" name="Nature">
        <title>The DNA sequence and analysis of human chromosome 6.</title>
        <authorList>
            <person name="Mungall A.J."/>
            <person name="Palmer S.A."/>
            <person name="Sims S.K."/>
            <person name="Edwards C.A."/>
            <person name="Ashurst J.L."/>
            <person name="Wilming L."/>
            <person name="Jones M.C."/>
            <person name="Horton R."/>
            <person name="Hunt S.E."/>
            <person name="Scott C.E."/>
            <person name="Gilbert J.G.R."/>
            <person name="Clamp M.E."/>
            <person name="Bethel G."/>
            <person name="Milne S."/>
            <person name="Ainscough R."/>
            <person name="Almeida J.P."/>
            <person name="Ambrose K.D."/>
            <person name="Andrews T.D."/>
            <person name="Ashwell R.I.S."/>
            <person name="Babbage A.K."/>
            <person name="Bagguley C.L."/>
            <person name="Bailey J."/>
            <person name="Banerjee R."/>
            <person name="Barker D.J."/>
            <person name="Barlow K.F."/>
            <person name="Bates K."/>
            <person name="Beare D.M."/>
            <person name="Beasley H."/>
            <person name="Beasley O."/>
            <person name="Bird C.P."/>
            <person name="Blakey S.E."/>
            <person name="Bray-Allen S."/>
            <person name="Brook J."/>
            <person name="Brown A.J."/>
            <person name="Brown J.Y."/>
            <person name="Burford D.C."/>
            <person name="Burrill W."/>
            <person name="Burton J."/>
            <person name="Carder C."/>
            <person name="Carter N.P."/>
            <person name="Chapman J.C."/>
            <person name="Clark S.Y."/>
            <person name="Clark G."/>
            <person name="Clee C.M."/>
            <person name="Clegg S."/>
            <person name="Cobley V."/>
            <person name="Collier R.E."/>
            <person name="Collins J.E."/>
            <person name="Colman L.K."/>
            <person name="Corby N.R."/>
            <person name="Coville G.J."/>
            <person name="Culley K.M."/>
            <person name="Dhami P."/>
            <person name="Davies J."/>
            <person name="Dunn M."/>
            <person name="Earthrowl M.E."/>
            <person name="Ellington A.E."/>
            <person name="Evans K.A."/>
            <person name="Faulkner L."/>
            <person name="Francis M.D."/>
            <person name="Frankish A."/>
            <person name="Frankland J."/>
            <person name="French L."/>
            <person name="Garner P."/>
            <person name="Garnett J."/>
            <person name="Ghori M.J."/>
            <person name="Gilby L.M."/>
            <person name="Gillson C.J."/>
            <person name="Glithero R.J."/>
            <person name="Grafham D.V."/>
            <person name="Grant M."/>
            <person name="Gribble S."/>
            <person name="Griffiths C."/>
            <person name="Griffiths M.N.D."/>
            <person name="Hall R."/>
            <person name="Halls K.S."/>
            <person name="Hammond S."/>
            <person name="Harley J.L."/>
            <person name="Hart E.A."/>
            <person name="Heath P.D."/>
            <person name="Heathcott R."/>
            <person name="Holmes S.J."/>
            <person name="Howden P.J."/>
            <person name="Howe K.L."/>
            <person name="Howell G.R."/>
            <person name="Huckle E."/>
            <person name="Humphray S.J."/>
            <person name="Humphries M.D."/>
            <person name="Hunt A.R."/>
            <person name="Johnson C.M."/>
            <person name="Joy A.A."/>
            <person name="Kay M."/>
            <person name="Keenan S.J."/>
            <person name="Kimberley A.M."/>
            <person name="King A."/>
            <person name="Laird G.K."/>
            <person name="Langford C."/>
            <person name="Lawlor S."/>
            <person name="Leongamornlert D.A."/>
            <person name="Leversha M."/>
            <person name="Lloyd C.R."/>
            <person name="Lloyd D.M."/>
            <person name="Loveland J.E."/>
            <person name="Lovell J."/>
            <person name="Martin S."/>
            <person name="Mashreghi-Mohammadi M."/>
            <person name="Maslen G.L."/>
            <person name="Matthews L."/>
            <person name="McCann O.T."/>
            <person name="McLaren S.J."/>
            <person name="McLay K."/>
            <person name="McMurray A."/>
            <person name="Moore M.J.F."/>
            <person name="Mullikin J.C."/>
            <person name="Niblett D."/>
            <person name="Nickerson T."/>
            <person name="Novik K.L."/>
            <person name="Oliver K."/>
            <person name="Overton-Larty E.K."/>
            <person name="Parker A."/>
            <person name="Patel R."/>
            <person name="Pearce A.V."/>
            <person name="Peck A.I."/>
            <person name="Phillimore B.J.C.T."/>
            <person name="Phillips S."/>
            <person name="Plumb R.W."/>
            <person name="Porter K.M."/>
            <person name="Ramsey Y."/>
            <person name="Ranby S.A."/>
            <person name="Rice C.M."/>
            <person name="Ross M.T."/>
            <person name="Searle S.M."/>
            <person name="Sehra H.K."/>
            <person name="Sheridan E."/>
            <person name="Skuce C.D."/>
            <person name="Smith S."/>
            <person name="Smith M."/>
            <person name="Spraggon L."/>
            <person name="Squares S.L."/>
            <person name="Steward C.A."/>
            <person name="Sycamore N."/>
            <person name="Tamlyn-Hall G."/>
            <person name="Tester J."/>
            <person name="Theaker A.J."/>
            <person name="Thomas D.W."/>
            <person name="Thorpe A."/>
            <person name="Tracey A."/>
            <person name="Tromans A."/>
            <person name="Tubby B."/>
            <person name="Wall M."/>
            <person name="Wallis J.M."/>
            <person name="West A.P."/>
            <person name="White S.S."/>
            <person name="Whitehead S.L."/>
            <person name="Whittaker H."/>
            <person name="Wild A."/>
            <person name="Willey D.J."/>
            <person name="Wilmer T.E."/>
            <person name="Wood J.M."/>
            <person name="Wray P.W."/>
            <person name="Wyatt J.C."/>
            <person name="Young L."/>
            <person name="Younger R.M."/>
            <person name="Bentley D.R."/>
            <person name="Coulson A."/>
            <person name="Durbin R.M."/>
            <person name="Hubbard T."/>
            <person name="Sulston J.E."/>
            <person name="Dunham I."/>
            <person name="Rogers J."/>
            <person name="Beck S."/>
        </authorList>
    </citation>
    <scope>NUCLEOTIDE SEQUENCE [LARGE SCALE GENOMIC DNA]</scope>
</reference>
<reference key="5">
    <citation type="submission" date="2005-09" db="EMBL/GenBank/DDBJ databases">
        <authorList>
            <person name="Mural R.J."/>
            <person name="Istrail S."/>
            <person name="Sutton G.G."/>
            <person name="Florea L."/>
            <person name="Halpern A.L."/>
            <person name="Mobarry C.M."/>
            <person name="Lippert R."/>
            <person name="Walenz B."/>
            <person name="Shatkay H."/>
            <person name="Dew I."/>
            <person name="Miller J.R."/>
            <person name="Flanigan M.J."/>
            <person name="Edwards N.J."/>
            <person name="Bolanos R."/>
            <person name="Fasulo D."/>
            <person name="Halldorsson B.V."/>
            <person name="Hannenhalli S."/>
            <person name="Turner R."/>
            <person name="Yooseph S."/>
            <person name="Lu F."/>
            <person name="Nusskern D.R."/>
            <person name="Shue B.C."/>
            <person name="Zheng X.H."/>
            <person name="Zhong F."/>
            <person name="Delcher A.L."/>
            <person name="Huson D.H."/>
            <person name="Kravitz S.A."/>
            <person name="Mouchard L."/>
            <person name="Reinert K."/>
            <person name="Remington K.A."/>
            <person name="Clark A.G."/>
            <person name="Waterman M.S."/>
            <person name="Eichler E.E."/>
            <person name="Adams M.D."/>
            <person name="Hunkapiller M.W."/>
            <person name="Myers E.W."/>
            <person name="Venter J.C."/>
        </authorList>
    </citation>
    <scope>NUCLEOTIDE SEQUENCE [LARGE SCALE GENOMIC DNA]</scope>
</reference>
<reference key="6">
    <citation type="journal article" date="2004" name="Genome Res.">
        <title>The status, quality, and expansion of the NIH full-length cDNA project: the Mammalian Gene Collection (MGC).</title>
        <authorList>
            <consortium name="The MGC Project Team"/>
        </authorList>
    </citation>
    <scope>NUCLEOTIDE SEQUENCE [LARGE SCALE MRNA] (ISOFORMS 1 AND 2)</scope>
    <source>
        <tissue>Lung</tissue>
        <tissue>Placenta</tissue>
    </source>
</reference>
<reference key="7">
    <citation type="submission" date="2009-10" db="UniProtKB">
        <authorList>
            <person name="Bienvenut W.V."/>
            <person name="Lempens A."/>
            <person name="Norman J.C."/>
        </authorList>
    </citation>
    <scope>PROTEIN SEQUENCE OF 1-9; 44-56; 72-79; 99-123; 163-173; 180-192; 234-253 AND 380-396</scope>
    <scope>ACETYLATION AT MET-1</scope>
    <scope>IDENTIFICATION BY MASS SPECTROMETRY</scope>
    <source>
        <tissue>Ovarian carcinoma</tissue>
    </source>
</reference>
<reference key="8">
    <citation type="journal article" date="2000" name="Hum. Mol. Genet.">
        <title>Identification of WTAP, a novel Wilms' tumour 1-associating protein.</title>
        <authorList>
            <person name="Little N.A."/>
            <person name="Hastie N.D."/>
            <person name="Davies R.C."/>
        </authorList>
    </citation>
    <scope>NUCLEOTIDE SEQUENCE [MRNA] OF 4-391 (ISOFORM 1)</scope>
    <scope>INTERACTION WITH WT1</scope>
    <scope>SUBCELLULAR LOCATION</scope>
    <scope>TISSUE SPECIFICITY</scope>
    <source>
        <tissue>Fetal kidney</tissue>
    </source>
</reference>
<reference key="9">
    <citation type="journal article" date="2007" name="BMC Genomics">
        <title>The full-ORF clone resource of the German cDNA consortium.</title>
        <authorList>
            <person name="Bechtel S."/>
            <person name="Rosenfelder H."/>
            <person name="Duda A."/>
            <person name="Schmidt C.P."/>
            <person name="Ernst U."/>
            <person name="Wellenreuther R."/>
            <person name="Mehrle A."/>
            <person name="Schuster C."/>
            <person name="Bahr A."/>
            <person name="Bloecker H."/>
            <person name="Heubner D."/>
            <person name="Hoerlein A."/>
            <person name="Michel G."/>
            <person name="Wedler H."/>
            <person name="Koehrer K."/>
            <person name="Ottenwaelder B."/>
            <person name="Poustka A."/>
            <person name="Wiemann S."/>
            <person name="Schupp I."/>
        </authorList>
    </citation>
    <scope>NUCLEOTIDE SEQUENCE [LARGE SCALE MRNA] OF 112-396 (ISOFORM 1)</scope>
    <source>
        <tissue>Amygdala</tissue>
    </source>
</reference>
<reference key="10">
    <citation type="journal article" date="2006" name="Proc. Natl. Acad. Sci. U.S.A.">
        <title>Wilms' tumor 1-associating protein regulates G2/M transition through stabilization of cyclin A2 mRNA.</title>
        <authorList>
            <person name="Horiuchi K."/>
            <person name="Umetani M."/>
            <person name="Minami T."/>
            <person name="Okayama H."/>
            <person name="Takada S."/>
            <person name="Yamamoto M."/>
            <person name="Aburatani H."/>
            <person name="Reid P.C."/>
            <person name="Housman D.E."/>
            <person name="Hamakubo T."/>
            <person name="Kodama T."/>
        </authorList>
    </citation>
    <scope>FUNCTION</scope>
</reference>
<reference key="11">
    <citation type="journal article" date="2006" name="Circ. Res.">
        <title>Wilms' tumor 1-associating protein regulates the proliferation of vascular smooth muscle cells.</title>
        <authorList>
            <person name="Small T.W."/>
            <person name="Bolender Z."/>
            <person name="Bueno C."/>
            <person name="O'Neil C."/>
            <person name="Nong Z."/>
            <person name="Rushlow W."/>
            <person name="Rajakumar N."/>
            <person name="Kandel C."/>
            <person name="Strong J."/>
            <person name="Madrenas J."/>
            <person name="Pickering J.G."/>
        </authorList>
    </citation>
    <scope>FUNCTION</scope>
    <scope>INTERACTION WITH WT1</scope>
</reference>
<reference key="12">
    <citation type="journal article" date="2008" name="Proc. Natl. Acad. Sci. U.S.A.">
        <title>A quantitative atlas of mitotic phosphorylation.</title>
        <authorList>
            <person name="Dephoure N."/>
            <person name="Zhou C."/>
            <person name="Villen J."/>
            <person name="Beausoleil S.A."/>
            <person name="Bakalarski C.E."/>
            <person name="Elledge S.J."/>
            <person name="Gygi S.P."/>
        </authorList>
    </citation>
    <scope>PHOSPHORYLATION [LARGE SCALE ANALYSIS] AT SER-306</scope>
    <scope>IDENTIFICATION BY MASS SPECTROMETRY [LARGE SCALE ANALYSIS]</scope>
    <source>
        <tissue>Cervix carcinoma</tissue>
    </source>
</reference>
<reference key="13">
    <citation type="journal article" date="2009" name="Anal. Chem.">
        <title>Lys-N and trypsin cover complementary parts of the phosphoproteome in a refined SCX-based approach.</title>
        <authorList>
            <person name="Gauci S."/>
            <person name="Helbig A.O."/>
            <person name="Slijper M."/>
            <person name="Krijgsveld J."/>
            <person name="Heck A.J."/>
            <person name="Mohammed S."/>
        </authorList>
    </citation>
    <scope>IDENTIFICATION BY MASS SPECTROMETRY [LARGE SCALE ANALYSIS]</scope>
</reference>
<reference key="14">
    <citation type="journal article" date="2009" name="Sci. Signal.">
        <title>Quantitative phosphoproteomic analysis of T cell receptor signaling reveals system-wide modulation of protein-protein interactions.</title>
        <authorList>
            <person name="Mayya V."/>
            <person name="Lundgren D.H."/>
            <person name="Hwang S.-I."/>
            <person name="Rezaul K."/>
            <person name="Wu L."/>
            <person name="Eng J.K."/>
            <person name="Rodionov V."/>
            <person name="Han D.K."/>
        </authorList>
    </citation>
    <scope>PHOSPHORYLATION [LARGE SCALE ANALYSIS] AT SER-305 AND SER-306</scope>
    <scope>IDENTIFICATION BY MASS SPECTROMETRY [LARGE SCALE ANALYSIS]</scope>
    <source>
        <tissue>Leukemic T-cell</tissue>
    </source>
</reference>
<reference key="15">
    <citation type="journal article" date="2010" name="Sci. Signal.">
        <title>Quantitative phosphoproteomics reveals widespread full phosphorylation site occupancy during mitosis.</title>
        <authorList>
            <person name="Olsen J.V."/>
            <person name="Vermeulen M."/>
            <person name="Santamaria A."/>
            <person name="Kumar C."/>
            <person name="Miller M.L."/>
            <person name="Jensen L.J."/>
            <person name="Gnad F."/>
            <person name="Cox J."/>
            <person name="Jensen T.S."/>
            <person name="Nigg E.A."/>
            <person name="Brunak S."/>
            <person name="Mann M."/>
        </authorList>
    </citation>
    <scope>PHOSPHORYLATION [LARGE SCALE ANALYSIS] AT SER-306 AND SER-388</scope>
    <scope>IDENTIFICATION BY MASS SPECTROMETRY [LARGE SCALE ANALYSIS]</scope>
    <source>
        <tissue>Cervix carcinoma</tissue>
    </source>
</reference>
<reference key="16">
    <citation type="journal article" date="2011" name="BMC Syst. Biol.">
        <title>Initial characterization of the human central proteome.</title>
        <authorList>
            <person name="Burkard T.R."/>
            <person name="Planyavsky M."/>
            <person name="Kaupe I."/>
            <person name="Breitwieser F.P."/>
            <person name="Buerckstuemmer T."/>
            <person name="Bennett K.L."/>
            <person name="Superti-Furga G."/>
            <person name="Colinge J."/>
        </authorList>
    </citation>
    <scope>IDENTIFICATION BY MASS SPECTROMETRY [LARGE SCALE ANALYSIS]</scope>
</reference>
<reference key="17">
    <citation type="journal article" date="2011" name="Sci. Signal.">
        <title>System-wide temporal characterization of the proteome and phosphoproteome of human embryonic stem cell differentiation.</title>
        <authorList>
            <person name="Rigbolt K.T."/>
            <person name="Prokhorova T.A."/>
            <person name="Akimov V."/>
            <person name="Henningsen J."/>
            <person name="Johansen P.T."/>
            <person name="Kratchmarova I."/>
            <person name="Kassem M."/>
            <person name="Mann M."/>
            <person name="Olsen J.V."/>
            <person name="Blagoev B."/>
        </authorList>
    </citation>
    <scope>PHOSPHORYLATION [LARGE SCALE ANALYSIS] AT SER-306</scope>
    <scope>IDENTIFICATION BY MASS SPECTROMETRY [LARGE SCALE ANALYSIS]</scope>
</reference>
<reference key="18">
    <citation type="journal article" date="2012" name="Proc. Natl. Acad. Sci. U.S.A.">
        <title>N-terminal acetylome analyses and functional insights of the N-terminal acetyltransferase NatB.</title>
        <authorList>
            <person name="Van Damme P."/>
            <person name="Lasa M."/>
            <person name="Polevoda B."/>
            <person name="Gazquez C."/>
            <person name="Elosegui-Artola A."/>
            <person name="Kim D.S."/>
            <person name="De Juan-Pardo E."/>
            <person name="Demeyer K."/>
            <person name="Hole K."/>
            <person name="Larrea E."/>
            <person name="Timmerman E."/>
            <person name="Prieto J."/>
            <person name="Arnesen T."/>
            <person name="Sherman F."/>
            <person name="Gevaert K."/>
            <person name="Aldabe R."/>
        </authorList>
    </citation>
    <scope>ACETYLATION [LARGE SCALE ANALYSIS] AT MET-1</scope>
    <scope>IDENTIFICATION BY MASS SPECTROMETRY [LARGE SCALE ANALYSIS]</scope>
</reference>
<reference key="19">
    <citation type="journal article" date="2013" name="J. Biol. Chem.">
        <title>Identification of Wilms' tumor 1-associating protein complex and its role in alternative splicing and the cell cycle.</title>
        <authorList>
            <person name="Horiuchi K."/>
            <person name="Kawamura T."/>
            <person name="Iwanari H."/>
            <person name="Ohashi R."/>
            <person name="Naito M."/>
            <person name="Kodama T."/>
            <person name="Hamakubo T."/>
        </authorList>
    </citation>
    <scope>IDENTIFICATION IN A MACOM-LIKE COMPLEX</scope>
    <scope>SUBCELLULAR LOCATION</scope>
</reference>
<reference key="20">
    <citation type="journal article" date="2013" name="J. Proteome Res.">
        <title>Toward a comprehensive characterization of a human cancer cell phosphoproteome.</title>
        <authorList>
            <person name="Zhou H."/>
            <person name="Di Palma S."/>
            <person name="Preisinger C."/>
            <person name="Peng M."/>
            <person name="Polat A.N."/>
            <person name="Heck A.J."/>
            <person name="Mohammed S."/>
        </authorList>
    </citation>
    <scope>PHOSPHORYLATION [LARGE SCALE ANALYSIS] AT SER-14 AND SER-305</scope>
    <scope>IDENTIFICATION BY MASS SPECTROMETRY [LARGE SCALE ANALYSIS]</scope>
    <source>
        <tissue>Cervix carcinoma</tissue>
        <tissue>Erythroleukemia</tissue>
    </source>
</reference>
<reference key="21">
    <citation type="journal article" date="2014" name="Cell Res.">
        <title>Mammalian WTAP is a regulatory subunit of the RNA N6-methyladenosine methyltransferase.</title>
        <authorList>
            <person name="Ping X.L."/>
            <person name="Sun B.F."/>
            <person name="Wang L."/>
            <person name="Xiao W."/>
            <person name="Yang X."/>
            <person name="Wang W.J."/>
            <person name="Adhikari S."/>
            <person name="Shi Y."/>
            <person name="Lv Y."/>
            <person name="Chen Y.S."/>
            <person name="Zhao X."/>
            <person name="Li A."/>
            <person name="Yang Y."/>
            <person name="Dahal U."/>
            <person name="Lou X.M."/>
            <person name="Liu X."/>
            <person name="Huang J."/>
            <person name="Yuan W.P."/>
            <person name="Zhu X.F."/>
            <person name="Cheng T."/>
            <person name="Zhao Y.L."/>
            <person name="Wang X."/>
            <person name="Danielsen J.M."/>
            <person name="Liu F."/>
            <person name="Yang Y.G."/>
        </authorList>
    </citation>
    <scope>FUNCTION</scope>
    <scope>SUBCELLULAR LOCATION</scope>
    <scope>IDENTIFICATION IN THE WMM COMPLEX</scope>
</reference>
<reference key="22">
    <citation type="journal article" date="2014" name="Cell Rep.">
        <title>Perturbation of m6A writers reveals two distinct classes of mRNA methylation at internal and 5' sites.</title>
        <authorList>
            <person name="Schwartz S."/>
            <person name="Mumbach M.R."/>
            <person name="Jovanovic M."/>
            <person name="Wang T."/>
            <person name="Maciag K."/>
            <person name="Bushkin G.G."/>
            <person name="Mertins P."/>
            <person name="Ter-Ovanesyan D."/>
            <person name="Habib N."/>
            <person name="Cacchiarelli D."/>
            <person name="Sanjana N.E."/>
            <person name="Freinkman E."/>
            <person name="Pacold M.E."/>
            <person name="Satija R."/>
            <person name="Mikkelsen T.S."/>
            <person name="Hacohen N."/>
            <person name="Zhang F."/>
            <person name="Carr S.A."/>
            <person name="Lander E.S."/>
            <person name="Regev A."/>
        </authorList>
    </citation>
    <scope>FUNCTION</scope>
    <scope>IDENTIFICATION IN THE WMM COMPLEX</scope>
</reference>
<reference key="23">
    <citation type="journal article" date="2014" name="Nat. Chem. Biol.">
        <title>A METTL3-METTL14 complex mediates mammalian nuclear RNA N-adenosine methylation.</title>
        <authorList>
            <person name="Liu J."/>
            <person name="Yue Y."/>
            <person name="Han D."/>
            <person name="Wang X."/>
            <person name="Fu Y."/>
            <person name="Zhang L."/>
            <person name="Jia G."/>
            <person name="Yu M."/>
            <person name="Lu Z."/>
            <person name="Deng X."/>
            <person name="Dai Q."/>
            <person name="Chen W."/>
            <person name="He C."/>
        </authorList>
    </citation>
    <scope>FUNCTION</scope>
    <scope>SUBCELLULAR LOCATION</scope>
    <scope>IDENTIFICATION IN THE WMM COMPLEX</scope>
</reference>
<reference key="24">
    <citation type="journal article" date="2015" name="Nature">
        <title>Dynamic m(6)A mRNA methylation directs translational control of heat shock response.</title>
        <authorList>
            <person name="Zhou J."/>
            <person name="Wan J."/>
            <person name="Gao X."/>
            <person name="Zhang X."/>
            <person name="Jaffrey S.R."/>
            <person name="Qian S.B."/>
        </authorList>
    </citation>
    <scope>SUBCELLULAR LOCATION</scope>
</reference>
<reference key="25">
    <citation type="journal article" date="2018" name="Cell Discov.">
        <title>VIRMA mediates preferential m6A mRNA methylation in 3'UTR and near stop codon and associates with alternative polyadenylation.</title>
        <authorList>
            <person name="Yue Y."/>
            <person name="Liu J."/>
            <person name="Cui X."/>
            <person name="Cao J."/>
            <person name="Luo G."/>
            <person name="Zhang Z."/>
            <person name="Cheng T."/>
            <person name="Gao M."/>
            <person name="Shu X."/>
            <person name="Ma H."/>
            <person name="Wang F."/>
            <person name="Wang X."/>
            <person name="Shen B."/>
            <person name="Wang Y."/>
            <person name="Feng X."/>
            <person name="He C."/>
            <person name="Liu J."/>
        </authorList>
    </citation>
    <scope>FUNCTION</scope>
    <scope>IDENTIFICATION IN THE WMM COMPLEX</scope>
</reference>
<reference key="26">
    <citation type="journal article" date="2018" name="Nucleic Acids Res.">
        <title>SUMOylation of the m6A-RNA methyltransferase METTL3 modulates its function.</title>
        <authorList>
            <person name="Du Y."/>
            <person name="Hou G."/>
            <person name="Zhang H."/>
            <person name="Dou J."/>
            <person name="He J."/>
            <person name="Guo Y."/>
            <person name="Li L."/>
            <person name="Chen R."/>
            <person name="Wang Y."/>
            <person name="Deng R."/>
            <person name="Huang J."/>
            <person name="Jiang B."/>
            <person name="Xu M."/>
            <person name="Cheng J."/>
            <person name="Chen G.Q."/>
            <person name="Zhao X."/>
            <person name="Yu J."/>
        </authorList>
    </citation>
    <scope>IDENTIFICATION IN THE WMM COMPLEX</scope>
</reference>
<reference key="27">
    <citation type="journal article" date="2018" name="RNA">
        <title>Interactions, localization, and phosphorylation of the m6A generating METTL3-METTL14-WTAP complex.</title>
        <authorList>
            <person name="Schoeller E."/>
            <person name="Weichmann F."/>
            <person name="Treiber T."/>
            <person name="Ringle S."/>
            <person name="Treiber N."/>
            <person name="Flatley A."/>
            <person name="Feederle R."/>
            <person name="Bruckmann A."/>
            <person name="Meister G."/>
        </authorList>
    </citation>
    <scope>IDENTIFICATION IN THE WMM COMPLEX</scope>
</reference>
<name>FL2D_HUMAN</name>
<dbReference type="EMBL" id="AF374416">
    <property type="protein sequence ID" value="AAK54764.1"/>
    <property type="molecule type" value="mRNA"/>
</dbReference>
<dbReference type="EMBL" id="D14661">
    <property type="protein sequence ID" value="BAA03495.1"/>
    <property type="molecule type" value="mRNA"/>
</dbReference>
<dbReference type="EMBL" id="AK127822">
    <property type="protein sequence ID" value="BAG54579.1"/>
    <property type="molecule type" value="mRNA"/>
</dbReference>
<dbReference type="EMBL" id="AL135914">
    <property type="status" value="NOT_ANNOTATED_CDS"/>
    <property type="molecule type" value="Genomic_DNA"/>
</dbReference>
<dbReference type="EMBL" id="CH471051">
    <property type="protein sequence ID" value="EAW47622.1"/>
    <property type="molecule type" value="Genomic_DNA"/>
</dbReference>
<dbReference type="EMBL" id="CH471051">
    <property type="protein sequence ID" value="EAW47624.1"/>
    <property type="molecule type" value="Genomic_DNA"/>
</dbReference>
<dbReference type="EMBL" id="CH471051">
    <property type="protein sequence ID" value="EAW47625.1"/>
    <property type="molecule type" value="Genomic_DNA"/>
</dbReference>
<dbReference type="EMBL" id="BC000383">
    <property type="protein sequence ID" value="AAH00383.1"/>
    <property type="molecule type" value="mRNA"/>
</dbReference>
<dbReference type="EMBL" id="BC004432">
    <property type="protein sequence ID" value="AAH04432.1"/>
    <property type="molecule type" value="mRNA"/>
</dbReference>
<dbReference type="EMBL" id="BC069192">
    <property type="protein sequence ID" value="AAH69192.1"/>
    <property type="molecule type" value="mRNA"/>
</dbReference>
<dbReference type="EMBL" id="AJ276706">
    <property type="protein sequence ID" value="CAC10188.1"/>
    <property type="molecule type" value="mRNA"/>
</dbReference>
<dbReference type="EMBL" id="AL583911">
    <property type="protein sequence ID" value="CAC29495.1"/>
    <property type="molecule type" value="mRNA"/>
</dbReference>
<dbReference type="CCDS" id="CCDS5266.1">
    <molecule id="Q15007-1"/>
</dbReference>
<dbReference type="CCDS" id="CCDS5267.1">
    <molecule id="Q15007-2"/>
</dbReference>
<dbReference type="RefSeq" id="NP_001257460.1">
    <molecule id="Q15007-1"/>
    <property type="nucleotide sequence ID" value="NM_001270531.2"/>
</dbReference>
<dbReference type="RefSeq" id="NP_001257461.1">
    <property type="nucleotide sequence ID" value="NM_001270532.1"/>
</dbReference>
<dbReference type="RefSeq" id="NP_001257462.1">
    <property type="nucleotide sequence ID" value="NM_001270533.1"/>
</dbReference>
<dbReference type="RefSeq" id="NP_004897.2">
    <molecule id="Q15007-1"/>
    <property type="nucleotide sequence ID" value="NM_004906.4"/>
</dbReference>
<dbReference type="RefSeq" id="NP_690596.1">
    <molecule id="Q15007-2"/>
    <property type="nucleotide sequence ID" value="NM_152857.3"/>
</dbReference>
<dbReference type="RefSeq" id="NP_690597.1">
    <molecule id="Q15007-2"/>
    <property type="nucleotide sequence ID" value="NM_152858.3"/>
</dbReference>
<dbReference type="RefSeq" id="XP_047275534.1">
    <molecule id="Q15007-1"/>
    <property type="nucleotide sequence ID" value="XM_047419578.1"/>
</dbReference>
<dbReference type="RefSeq" id="XP_054212834.1">
    <molecule id="Q15007-1"/>
    <property type="nucleotide sequence ID" value="XM_054356859.1"/>
</dbReference>
<dbReference type="PDB" id="7VF2">
    <property type="method" value="EM"/>
    <property type="resolution" value="3.00 A"/>
    <property type="chains" value="C/D=1-396"/>
</dbReference>
<dbReference type="PDB" id="7VF5">
    <property type="method" value="EM"/>
    <property type="resolution" value="3.00 A"/>
    <property type="chains" value="C/D=1-396"/>
</dbReference>
<dbReference type="PDB" id="7YFJ">
    <property type="method" value="X-ray"/>
    <property type="resolution" value="2.40 A"/>
    <property type="chains" value="A/B=130-241"/>
</dbReference>
<dbReference type="PDB" id="7YG4">
    <property type="method" value="EM"/>
    <property type="resolution" value="3.10 A"/>
    <property type="chains" value="B/E=1-273"/>
</dbReference>
<dbReference type="PDBsum" id="7VF2"/>
<dbReference type="PDBsum" id="7VF5"/>
<dbReference type="PDBsum" id="7YFJ"/>
<dbReference type="PDBsum" id="7YG4"/>
<dbReference type="EMDB" id="EMD-31946"/>
<dbReference type="EMDB" id="EMD-31947"/>
<dbReference type="EMDB" id="EMD-33807"/>
<dbReference type="SMR" id="Q15007"/>
<dbReference type="BioGRID" id="114957">
    <property type="interactions" value="200"/>
</dbReference>
<dbReference type="ComplexPortal" id="CPX-1605">
    <property type="entry name" value="WMM N6-adenosine-methyltransferase complex"/>
</dbReference>
<dbReference type="CORUM" id="Q15007"/>
<dbReference type="DIP" id="DIP-57185N"/>
<dbReference type="FunCoup" id="Q15007">
    <property type="interactions" value="4811"/>
</dbReference>
<dbReference type="IntAct" id="Q15007">
    <property type="interactions" value="164"/>
</dbReference>
<dbReference type="MINT" id="Q15007"/>
<dbReference type="STRING" id="9606.ENSP00000351141"/>
<dbReference type="ChEMBL" id="CHEMBL4523298"/>
<dbReference type="GlyGen" id="Q15007">
    <property type="glycosylation" value="1 site, 1 O-linked glycan (1 site)"/>
</dbReference>
<dbReference type="iPTMnet" id="Q15007"/>
<dbReference type="MetOSite" id="Q15007"/>
<dbReference type="PhosphoSitePlus" id="Q15007"/>
<dbReference type="SwissPalm" id="Q15007"/>
<dbReference type="BioMuta" id="WTAP"/>
<dbReference type="DMDM" id="47117889"/>
<dbReference type="jPOST" id="Q15007"/>
<dbReference type="MassIVE" id="Q15007"/>
<dbReference type="PaxDb" id="9606-ENSP00000351141"/>
<dbReference type="PeptideAtlas" id="Q15007"/>
<dbReference type="ProteomicsDB" id="60358">
    <molecule id="Q15007-1"/>
</dbReference>
<dbReference type="ProteomicsDB" id="60359">
    <molecule id="Q15007-2"/>
</dbReference>
<dbReference type="Pumba" id="Q15007"/>
<dbReference type="Antibodypedia" id="2136">
    <property type="antibodies" value="377 antibodies from 32 providers"/>
</dbReference>
<dbReference type="DNASU" id="9589"/>
<dbReference type="Ensembl" id="ENST00000337387.4">
    <molecule id="Q15007-2"/>
    <property type="protein sequence ID" value="ENSP00000336911.4"/>
    <property type="gene ID" value="ENSG00000146457.16"/>
</dbReference>
<dbReference type="Ensembl" id="ENST00000358372.8">
    <molecule id="Q15007-1"/>
    <property type="protein sequence ID" value="ENSP00000351141.4"/>
    <property type="gene ID" value="ENSG00000146457.16"/>
</dbReference>
<dbReference type="Ensembl" id="ENST00000621533.5">
    <molecule id="Q15007-1"/>
    <property type="protein sequence ID" value="ENSP00000479438.1"/>
    <property type="gene ID" value="ENSG00000146457.16"/>
</dbReference>
<dbReference type="Ensembl" id="ENST00000650096.1">
    <molecule id="Q15007-2"/>
    <property type="protein sequence ID" value="ENSP00000497840.1"/>
    <property type="gene ID" value="ENSG00000146457.16"/>
</dbReference>
<dbReference type="GeneID" id="9589"/>
<dbReference type="KEGG" id="hsa:9589"/>
<dbReference type="MANE-Select" id="ENST00000621533.5">
    <property type="protein sequence ID" value="ENSP00000479438.1"/>
    <property type="RefSeq nucleotide sequence ID" value="NM_001270531.2"/>
    <property type="RefSeq protein sequence ID" value="NP_001257460.1"/>
</dbReference>
<dbReference type="UCSC" id="uc003qsl.6">
    <molecule id="Q15007-1"/>
    <property type="organism name" value="human"/>
</dbReference>
<dbReference type="AGR" id="HGNC:16846"/>
<dbReference type="CTD" id="9589"/>
<dbReference type="DisGeNET" id="9589"/>
<dbReference type="GeneCards" id="WTAP"/>
<dbReference type="HGNC" id="HGNC:16846">
    <property type="gene designation" value="WTAP"/>
</dbReference>
<dbReference type="HPA" id="ENSG00000146457">
    <property type="expression patterns" value="Low tissue specificity"/>
</dbReference>
<dbReference type="MIM" id="605442">
    <property type="type" value="gene"/>
</dbReference>
<dbReference type="neXtProt" id="NX_Q15007"/>
<dbReference type="OpenTargets" id="ENSG00000146457"/>
<dbReference type="PharmGKB" id="PA134864847"/>
<dbReference type="VEuPathDB" id="HostDB:ENSG00000146457"/>
<dbReference type="eggNOG" id="KOG2991">
    <property type="taxonomic scope" value="Eukaryota"/>
</dbReference>
<dbReference type="GeneTree" id="ENSGT00390000013931"/>
<dbReference type="HOGENOM" id="CLU_044551_1_0_1"/>
<dbReference type="InParanoid" id="Q15007"/>
<dbReference type="OMA" id="NTDPHED"/>
<dbReference type="OrthoDB" id="3366661at2759"/>
<dbReference type="PAN-GO" id="Q15007">
    <property type="GO annotations" value="3 GO annotations based on evolutionary models"/>
</dbReference>
<dbReference type="PhylomeDB" id="Q15007"/>
<dbReference type="TreeFam" id="TF325869"/>
<dbReference type="PathwayCommons" id="Q15007"/>
<dbReference type="Reactome" id="R-HSA-72203">
    <property type="pathway name" value="Processing of Capped Intron-Containing Pre-mRNA"/>
</dbReference>
<dbReference type="SignaLink" id="Q15007"/>
<dbReference type="BioGRID-ORCS" id="9589">
    <property type="hits" value="488 hits in 1162 CRISPR screens"/>
</dbReference>
<dbReference type="CD-CODE" id="804901D1">
    <property type="entry name" value="Nuclear speckle"/>
</dbReference>
<dbReference type="ChiTaRS" id="WTAP">
    <property type="organism name" value="human"/>
</dbReference>
<dbReference type="GeneWiki" id="WTAP_(gene)"/>
<dbReference type="GenomeRNAi" id="9589"/>
<dbReference type="Pharos" id="Q15007">
    <property type="development level" value="Tbio"/>
</dbReference>
<dbReference type="PRO" id="PR:Q15007"/>
<dbReference type="Proteomes" id="UP000005640">
    <property type="component" value="Chromosome 6"/>
</dbReference>
<dbReference type="RNAct" id="Q15007">
    <property type="molecule type" value="protein"/>
</dbReference>
<dbReference type="Bgee" id="ENSG00000146457">
    <property type="expression patterns" value="Expressed in secondary oocyte and 204 other cell types or tissues"/>
</dbReference>
<dbReference type="ExpressionAtlas" id="Q15007">
    <property type="expression patterns" value="baseline and differential"/>
</dbReference>
<dbReference type="GO" id="GO:0005737">
    <property type="term" value="C:cytoplasm"/>
    <property type="evidence" value="ECO:0000250"/>
    <property type="project" value="UniProtKB"/>
</dbReference>
<dbReference type="GO" id="GO:0031965">
    <property type="term" value="C:nuclear membrane"/>
    <property type="evidence" value="ECO:0000314"/>
    <property type="project" value="UniProtKB"/>
</dbReference>
<dbReference type="GO" id="GO:0016607">
    <property type="term" value="C:nuclear speck"/>
    <property type="evidence" value="ECO:0000314"/>
    <property type="project" value="HPA"/>
</dbReference>
<dbReference type="GO" id="GO:0005654">
    <property type="term" value="C:nucleoplasm"/>
    <property type="evidence" value="ECO:0000314"/>
    <property type="project" value="UniProtKB"/>
</dbReference>
<dbReference type="GO" id="GO:0005634">
    <property type="term" value="C:nucleus"/>
    <property type="evidence" value="ECO:0000314"/>
    <property type="project" value="UniProtKB"/>
</dbReference>
<dbReference type="GO" id="GO:0036396">
    <property type="term" value="C:RNA N6-methyladenosine methyltransferase complex"/>
    <property type="evidence" value="ECO:0000314"/>
    <property type="project" value="UniProtKB"/>
</dbReference>
<dbReference type="GO" id="GO:0042802">
    <property type="term" value="F:identical protein binding"/>
    <property type="evidence" value="ECO:0000353"/>
    <property type="project" value="IntAct"/>
</dbReference>
<dbReference type="GO" id="GO:0016556">
    <property type="term" value="P:mRNA modification"/>
    <property type="evidence" value="ECO:0007669"/>
    <property type="project" value="InterPro"/>
</dbReference>
<dbReference type="GO" id="GO:0006397">
    <property type="term" value="P:mRNA processing"/>
    <property type="evidence" value="ECO:0000315"/>
    <property type="project" value="UniProtKB"/>
</dbReference>
<dbReference type="GO" id="GO:0000381">
    <property type="term" value="P:regulation of alternative mRNA splicing, via spliceosome"/>
    <property type="evidence" value="ECO:0000315"/>
    <property type="project" value="UniProtKB"/>
</dbReference>
<dbReference type="GO" id="GO:0008380">
    <property type="term" value="P:RNA splicing"/>
    <property type="evidence" value="ECO:0007669"/>
    <property type="project" value="UniProtKB-KW"/>
</dbReference>
<dbReference type="InterPro" id="IPR033757">
    <property type="entry name" value="WTAP"/>
</dbReference>
<dbReference type="PANTHER" id="PTHR15217:SF1">
    <property type="entry name" value="PRE-MRNA-SPLICING REGULATOR WTAP"/>
    <property type="match status" value="1"/>
</dbReference>
<dbReference type="PANTHER" id="PTHR15217">
    <property type="entry name" value="WILMS' TUMOR 1-ASSOCIATING PROTEIN"/>
    <property type="match status" value="1"/>
</dbReference>
<dbReference type="Pfam" id="PF17098">
    <property type="entry name" value="Wtap"/>
    <property type="match status" value="1"/>
</dbReference>
<organism>
    <name type="scientific">Homo sapiens</name>
    <name type="common">Human</name>
    <dbReference type="NCBI Taxonomy" id="9606"/>
    <lineage>
        <taxon>Eukaryota</taxon>
        <taxon>Metazoa</taxon>
        <taxon>Chordata</taxon>
        <taxon>Craniata</taxon>
        <taxon>Vertebrata</taxon>
        <taxon>Euteleostomi</taxon>
        <taxon>Mammalia</taxon>
        <taxon>Eutheria</taxon>
        <taxon>Euarchontoglires</taxon>
        <taxon>Primates</taxon>
        <taxon>Haplorrhini</taxon>
        <taxon>Catarrhini</taxon>
        <taxon>Hominidae</taxon>
        <taxon>Homo</taxon>
    </lineage>
</organism>
<gene>
    <name evidence="16 22" type="primary">WTAP</name>
    <name evidence="20" type="synonym">KIAA0105</name>
</gene>
<proteinExistence type="evidence at protein level"/>
<sequence>MTNEEPLPKKVRLSETDFKVMARDELILRWKQYEAYVQALEGKYTDLNSNDVTGLRESEEKLKQQQQESARRENILVMRLATKEQEMQECTTQIQYLKQVQQPSVAQLRSTMVDPAINLFFLKMKGELEQTKDKLEQAQNELSAWKFTPDSQTGKKLMAKCRMLIQENQELGRQLSQGRIAQLEAELALQKKYSEELKSSQDELNDFIIQLDEEVEGMQSTILVLQQQLKETRQQLAQYQQQQSQASAPSTSRTTASEPVEQSEATSKDCSRLTNGPSNGSSSRQRTSGSGFHREGNTTEDDFPSSPGNGNKSSNSSEERTGRGGSGYVNQLSAGYESVDSPTGSENSLTHQSNDTDSSHDPQEEKAVSGKGNRTVGSRHVQNGLDSSVNVQGSVL</sequence>
<accession>Q15007</accession>
<accession>Q5TCL8</accession>
<accession>Q5TCL9</accession>
<accession>Q96T28</accession>
<accession>Q9BYJ7</accession>
<accession>Q9H4E2</accession>
<protein>
    <recommendedName>
        <fullName evidence="21">Pre-mRNA-splicing regulator WTAP</fullName>
    </recommendedName>
    <alternativeName>
        <fullName evidence="17">Female-lethal(2)D homolog</fullName>
        <shortName evidence="17">hFL(2)D</shortName>
    </alternativeName>
    <alternativeName>
        <fullName evidence="16">WT1-associated protein</fullName>
    </alternativeName>
    <alternativeName>
        <fullName evidence="16">Wilms tumor 1-associating protein</fullName>
    </alternativeName>
</protein>
<feature type="chain" id="PRO_0000065983" description="Pre-mRNA-splicing regulator WTAP">
    <location>
        <begin position="1"/>
        <end position="396"/>
    </location>
</feature>
<feature type="region of interest" description="Disordered" evidence="2">
    <location>
        <begin position="240"/>
        <end position="396"/>
    </location>
</feature>
<feature type="compositionally biased region" description="Low complexity" evidence="2">
    <location>
        <begin position="240"/>
        <end position="257"/>
    </location>
</feature>
<feature type="compositionally biased region" description="Low complexity" evidence="2">
    <location>
        <begin position="278"/>
        <end position="291"/>
    </location>
</feature>
<feature type="compositionally biased region" description="Low complexity" evidence="2">
    <location>
        <begin position="304"/>
        <end position="316"/>
    </location>
</feature>
<feature type="compositionally biased region" description="Polar residues" evidence="2">
    <location>
        <begin position="340"/>
        <end position="356"/>
    </location>
</feature>
<feature type="compositionally biased region" description="Basic and acidic residues" evidence="2">
    <location>
        <begin position="357"/>
        <end position="368"/>
    </location>
</feature>
<feature type="compositionally biased region" description="Polar residues" evidence="2">
    <location>
        <begin position="380"/>
        <end position="396"/>
    </location>
</feature>
<feature type="modified residue" description="N-acetylmethionine" evidence="15 27">
    <location>
        <position position="1"/>
    </location>
</feature>
<feature type="modified residue" description="Phosphoserine" evidence="28">
    <location>
        <position position="14"/>
    </location>
</feature>
<feature type="modified residue" description="Phosphoserine" evidence="24 28">
    <location>
        <position position="305"/>
    </location>
</feature>
<feature type="modified residue" description="Phosphoserine" evidence="23 24 25 26">
    <location>
        <position position="306"/>
    </location>
</feature>
<feature type="modified residue" description="Phosphoserine" evidence="1">
    <location>
        <position position="341"/>
    </location>
</feature>
<feature type="modified residue" description="Phosphothreonine" evidence="1">
    <location>
        <position position="350"/>
    </location>
</feature>
<feature type="modified residue" description="Phosphoserine" evidence="25">
    <location>
        <position position="388"/>
    </location>
</feature>
<feature type="splice variant" id="VSP_010278" description="In isoform 2." evidence="18 19 20">
    <original>S</original>
    <variation>R</variation>
    <location>
        <position position="151"/>
    </location>
</feature>
<feature type="splice variant" id="VSP_010279" description="In isoform 2." evidence="18 19 20">
    <location>
        <begin position="152"/>
        <end position="396"/>
    </location>
</feature>
<feature type="sequence variant" id="VAR_036854" description="In dbSNP:rs35059844.">
    <original>E</original>
    <variation>D</variation>
    <location>
        <position position="84"/>
    </location>
</feature>
<feature type="helix" evidence="29">
    <location>
        <begin position="65"/>
        <end position="97"/>
    </location>
</feature>
<feature type="helix" evidence="29">
    <location>
        <begin position="103"/>
        <end position="111"/>
    </location>
</feature>
<feature type="helix" evidence="29">
    <location>
        <begin position="115"/>
        <end position="145"/>
    </location>
</feature>
<feature type="helix" evidence="30">
    <location>
        <begin position="153"/>
        <end position="241"/>
    </location>
</feature>
<feature type="strand" evidence="29">
    <location>
        <begin position="243"/>
        <end position="245"/>
    </location>
</feature>
<keyword id="KW-0002">3D-structure</keyword>
<keyword id="KW-0007">Acetylation</keyword>
<keyword id="KW-0025">Alternative splicing</keyword>
<keyword id="KW-0131">Cell cycle</keyword>
<keyword id="KW-0963">Cytoplasm</keyword>
<keyword id="KW-0217">Developmental protein</keyword>
<keyword id="KW-0903">Direct protein sequencing</keyword>
<keyword id="KW-0507">mRNA processing</keyword>
<keyword id="KW-0508">mRNA splicing</keyword>
<keyword id="KW-0539">Nucleus</keyword>
<keyword id="KW-0597">Phosphoprotein</keyword>
<keyword id="KW-1267">Proteomics identification</keyword>
<keyword id="KW-1185">Reference proteome</keyword>
<comment type="function">
    <text evidence="4 5 6 8 9 10 14">Associated component of the WMM complex, a complex that mediates N6-methyladenosine (m6A) methylation of RNAs, a modification that plays a role in the efficiency of mRNA splicing and RNA processing (PubMed:29507755). Required for accumulation of METTL3 and METTL14 to nuclear speckle (PubMed:24316715, PubMed:24407421, PubMed:24981863). Acts as a mRNA splicing regulator (PubMed:12444081). Regulates G2/M cell-cycle transition by binding to the 3' UTR of CCNA2, which enhances its stability (PubMed:17088532). Impairs WT1 DNA-binding ability and inhibits expression of WT1 target genes (PubMed:17095724).</text>
</comment>
<comment type="subunit">
    <text evidence="3 6 7 8 9 10 12 13 14">Component of the WMM complex, a N6-methyltransferase complex composed of a catalytic subcomplex, named MAC, and of an associated subcomplex, named MACOM (PubMed:24316715, PubMed:24407421, PubMed:24981863, PubMed:29348140, PubMed:29506078, PubMed:29507755). The MAC subcomplex is composed of METTL3 and METTL14 (PubMed:29507755). The MACOM subcomplex is composed of WTAP, ZC3H13, CBLL1/HAKAI, VIRMA, and, in some cases of RBM15 (RBM15 or RBM15B) (PubMed:29507755). Interacts with WT1 (PubMed:11001926, PubMed:17095724). Also a component of a MACOM-like complex, named WTAP complex, composed of WTAP, ZC3H13, CBLL1, VIRMA, RBM15, BCLAF1 and THRAP3 (PubMed:24100041).</text>
</comment>
<comment type="interaction">
    <interactant intactId="EBI-751647">
        <id>Q15007</id>
    </interactant>
    <interactant intactId="EBI-2824666">
        <id>Q6UXT9</id>
        <label>ABHD15</label>
    </interactant>
    <organismsDiffer>false</organismsDiffer>
    <experiments>3</experiments>
</comment>
<comment type="interaction">
    <interactant intactId="EBI-751647">
        <id>Q15007</id>
    </interactant>
    <interactant intactId="EBI-358049">
        <id>Q13895</id>
        <label>BYSL</label>
    </interactant>
    <organismsDiffer>false</organismsDiffer>
    <experiments>3</experiments>
</comment>
<comment type="interaction">
    <interactant intactId="EBI-751647">
        <id>Q15007</id>
    </interactant>
    <interactant intactId="EBI-745305">
        <id>Q13422</id>
        <label>IKZF1</label>
    </interactant>
    <organismsDiffer>false</organismsDiffer>
    <experiments>4</experiments>
</comment>
<comment type="interaction">
    <interactant intactId="EBI-751647">
        <id>Q15007</id>
    </interactant>
    <interactant intactId="EBI-11522367">
        <id>Q13422-7</id>
        <label>IKZF1</label>
    </interactant>
    <organismsDiffer>false</organismsDiffer>
    <experiments>7</experiments>
</comment>
<comment type="interaction">
    <interactant intactId="EBI-751647">
        <id>Q15007</id>
    </interactant>
    <interactant intactId="EBI-739552">
        <id>P43364</id>
        <label>MAGEA11</label>
    </interactant>
    <organismsDiffer>false</organismsDiffer>
    <experiments>4</experiments>
</comment>
<comment type="interaction">
    <interactant intactId="EBI-751647">
        <id>Q15007</id>
    </interactant>
    <interactant intactId="EBI-359352">
        <id>P25786</id>
        <label>PSMA1</label>
    </interactant>
    <organismsDiffer>false</organismsDiffer>
    <experiments>3</experiments>
</comment>
<comment type="interaction">
    <interactant intactId="EBI-751647">
        <id>Q15007</id>
    </interactant>
    <interactant intactId="EBI-1050793">
        <id>Q9GZT3</id>
        <label>SLIRP</label>
    </interactant>
    <organismsDiffer>false</organismsDiffer>
    <experiments>4</experiments>
</comment>
<comment type="interaction">
    <interactant intactId="EBI-751647">
        <id>Q15007</id>
    </interactant>
    <interactant intactId="EBI-11952764">
        <id>Q99081-3</id>
        <label>TCF12</label>
    </interactant>
    <organismsDiffer>false</organismsDiffer>
    <experiments>3</experiments>
</comment>
<comment type="interaction">
    <interactant intactId="EBI-751647">
        <id>Q15007</id>
    </interactant>
    <interactant intactId="EBI-357849">
        <id>Q15025</id>
        <label>TNIP1</label>
    </interactant>
    <organismsDiffer>false</organismsDiffer>
    <experiments>3</experiments>
</comment>
<comment type="interaction">
    <interactant intactId="EBI-751647">
        <id>Q15007</id>
    </interactant>
    <interactant intactId="EBI-2799833">
        <id>Q8N1B4</id>
        <label>VPS52</label>
    </interactant>
    <organismsDiffer>false</organismsDiffer>
    <experiments>6</experiments>
</comment>
<comment type="interaction">
    <interactant intactId="EBI-751647">
        <id>Q15007</id>
    </interactant>
    <interactant intactId="EBI-11745701">
        <id>P19544-6</id>
        <label>WT1</label>
    </interactant>
    <organismsDiffer>false</organismsDiffer>
    <experiments>3</experiments>
</comment>
<comment type="interaction">
    <interactant intactId="EBI-751647">
        <id>Q15007</id>
    </interactant>
    <interactant intactId="EBI-751647">
        <id>Q15007</id>
        <label>WTAP</label>
    </interactant>
    <organismsDiffer>false</organismsDiffer>
    <experiments>3</experiments>
</comment>
<comment type="interaction">
    <interactant intactId="EBI-751647">
        <id>Q15007</id>
    </interactant>
    <interactant intactId="EBI-347088">
        <id>P63104</id>
        <label>YWHAZ</label>
    </interactant>
    <organismsDiffer>false</organismsDiffer>
    <experiments>2</experiments>
</comment>
<comment type="interaction">
    <interactant intactId="EBI-751647">
        <id>Q15007</id>
    </interactant>
    <interactant intactId="EBI-8787052">
        <id>Q16600</id>
        <label>ZNF239</label>
    </interactant>
    <organismsDiffer>false</organismsDiffer>
    <experiments>3</experiments>
</comment>
<comment type="interaction">
    <interactant intactId="EBI-751647">
        <id>Q15007</id>
    </interactant>
    <interactant intactId="EBI-10172590">
        <id>Q7Z3I7</id>
        <label>ZNF572</label>
    </interactant>
    <organismsDiffer>false</organismsDiffer>
    <experiments>3</experiments>
</comment>
<comment type="interaction">
    <interactant intactId="EBI-16084961">
        <id>Q15007-1</id>
    </interactant>
    <interactant intactId="EBI-6661081">
        <id>Q9HCE5</id>
        <label>METTL14</label>
    </interactant>
    <organismsDiffer>false</organismsDiffer>
    <experiments>5</experiments>
</comment>
<comment type="interaction">
    <interactant intactId="EBI-25840023">
        <id>Q15007-2</id>
    </interactant>
    <interactant intactId="EBI-946046">
        <id>P54252</id>
        <label>ATXN3</label>
    </interactant>
    <organismsDiffer>false</organismsDiffer>
    <experiments>3</experiments>
</comment>
<comment type="interaction">
    <interactant intactId="EBI-25840023">
        <id>Q15007-2</id>
    </interactant>
    <interactant intactId="EBI-2115097">
        <id>P07339</id>
        <label>CTSD</label>
    </interactant>
    <organismsDiffer>false</organismsDiffer>
    <experiments>3</experiments>
</comment>
<comment type="interaction">
    <interactant intactId="EBI-25840023">
        <id>Q15007-2</id>
    </interactant>
    <interactant intactId="EBI-517086">
        <id>O43464</id>
        <label>HTRA2</label>
    </interactant>
    <organismsDiffer>false</organismsDiffer>
    <experiments>3</experiments>
</comment>
<comment type="interaction">
    <interactant intactId="EBI-25840023">
        <id>Q15007-2</id>
    </interactant>
    <interactant intactId="EBI-466029">
        <id>P42858</id>
        <label>HTT</label>
    </interactant>
    <organismsDiffer>false</organismsDiffer>
    <experiments>3</experiments>
</comment>
<comment type="interaction">
    <interactant intactId="EBI-25840023">
        <id>Q15007-2</id>
    </interactant>
    <interactant intactId="EBI-10975473">
        <id>O60333-2</id>
        <label>KIF1B</label>
    </interactant>
    <organismsDiffer>false</organismsDiffer>
    <experiments>3</experiments>
</comment>
<comment type="interaction">
    <interactant intactId="EBI-25840023">
        <id>Q15007-2</id>
    </interactant>
    <interactant intactId="EBI-752074">
        <id>P41219</id>
        <label>PRPH</label>
    </interactant>
    <organismsDiffer>false</organismsDiffer>
    <experiments>3</experiments>
</comment>
<comment type="interaction">
    <interactant intactId="EBI-25840023">
        <id>Q15007-2</id>
    </interactant>
    <interactant intactId="EBI-749195">
        <id>P60891</id>
        <label>PRPS1</label>
    </interactant>
    <organismsDiffer>false</organismsDiffer>
    <experiments>3</experiments>
</comment>
<comment type="interaction">
    <interactant intactId="EBI-25840023">
        <id>Q15007-2</id>
    </interactant>
    <interactant intactId="EBI-720609">
        <id>O76024</id>
        <label>WFS1</label>
    </interactant>
    <organismsDiffer>false</organismsDiffer>
    <experiments>3</experiments>
</comment>
<comment type="subcellular location">
    <subcellularLocation>
        <location evidence="9">Nucleus speckle</location>
    </subcellularLocation>
    <subcellularLocation>
        <location evidence="3 8 11">Nucleus</location>
        <location evidence="3 8 11">Nucleoplasm</location>
    </subcellularLocation>
    <subcellularLocation>
        <location evidence="1">Cytoplasm</location>
    </subcellularLocation>
    <text evidence="1">Mainly nuclear with some fraction located in the cytoplasm. ZC3H13 is required to anchor component of the MACOM subcomplex, such as VIRMA, in the nucleus.</text>
</comment>
<comment type="alternative products">
    <event type="alternative splicing"/>
    <isoform>
        <id>Q15007-1</id>
        <name>1</name>
        <sequence type="displayed"/>
    </isoform>
    <isoform>
        <id>Q15007-2</id>
        <name>2</name>
        <sequence type="described" ref="VSP_010278 VSP_010279"/>
    </isoform>
</comment>
<comment type="tissue specificity">
    <text evidence="3">Ubiquitously expressed.</text>
</comment>
<comment type="induction">
    <text>In smooth muscle cells, up-regulated after serum withdrawal, when cells become mature and non proliferative.</text>
</comment>
<comment type="similarity">
    <text evidence="21">Belongs to the fl(2)d family.</text>
</comment>
<evidence type="ECO:0000250" key="1">
    <source>
        <dbReference type="UniProtKB" id="Q9ER69"/>
    </source>
</evidence>
<evidence type="ECO:0000256" key="2">
    <source>
        <dbReference type="SAM" id="MobiDB-lite"/>
    </source>
</evidence>
<evidence type="ECO:0000269" key="3">
    <source>
    </source>
</evidence>
<evidence type="ECO:0000269" key="4">
    <source>
    </source>
</evidence>
<evidence type="ECO:0000269" key="5">
    <source>
    </source>
</evidence>
<evidence type="ECO:0000269" key="6">
    <source>
    </source>
</evidence>
<evidence type="ECO:0000269" key="7">
    <source>
    </source>
</evidence>
<evidence type="ECO:0000269" key="8">
    <source>
    </source>
</evidence>
<evidence type="ECO:0000269" key="9">
    <source>
    </source>
</evidence>
<evidence type="ECO:0000269" key="10">
    <source>
    </source>
</evidence>
<evidence type="ECO:0000269" key="11">
    <source>
    </source>
</evidence>
<evidence type="ECO:0000269" key="12">
    <source>
    </source>
</evidence>
<evidence type="ECO:0000269" key="13">
    <source>
    </source>
</evidence>
<evidence type="ECO:0000269" key="14">
    <source>
    </source>
</evidence>
<evidence type="ECO:0000269" key="15">
    <source ref="7"/>
</evidence>
<evidence type="ECO:0000303" key="16">
    <source>
    </source>
</evidence>
<evidence type="ECO:0000303" key="17">
    <source>
    </source>
</evidence>
<evidence type="ECO:0000303" key="18">
    <source>
    </source>
</evidence>
<evidence type="ECO:0000303" key="19">
    <source>
    </source>
</evidence>
<evidence type="ECO:0000303" key="20">
    <source>
    </source>
</evidence>
<evidence type="ECO:0000305" key="21"/>
<evidence type="ECO:0000312" key="22">
    <source>
        <dbReference type="HGNC" id="HGNC:16846"/>
    </source>
</evidence>
<evidence type="ECO:0007744" key="23">
    <source>
    </source>
</evidence>
<evidence type="ECO:0007744" key="24">
    <source>
    </source>
</evidence>
<evidence type="ECO:0007744" key="25">
    <source>
    </source>
</evidence>
<evidence type="ECO:0007744" key="26">
    <source>
    </source>
</evidence>
<evidence type="ECO:0007744" key="27">
    <source>
    </source>
</evidence>
<evidence type="ECO:0007744" key="28">
    <source>
    </source>
</evidence>
<evidence type="ECO:0007829" key="29">
    <source>
        <dbReference type="PDB" id="7VF2"/>
    </source>
</evidence>
<evidence type="ECO:0007829" key="30">
    <source>
        <dbReference type="PDB" id="7YFJ"/>
    </source>
</evidence>